<reference key="1">
    <citation type="journal article" date="2002" name="Proc. Natl. Acad. Sci. U.S.A.">
        <title>The genome sequence of the facultative intracellular pathogen Brucella melitensis.</title>
        <authorList>
            <person name="DelVecchio V.G."/>
            <person name="Kapatral V."/>
            <person name="Redkar R.J."/>
            <person name="Patra G."/>
            <person name="Mujer C."/>
            <person name="Los T."/>
            <person name="Ivanova N."/>
            <person name="Anderson I."/>
            <person name="Bhattacharyya A."/>
            <person name="Lykidis A."/>
            <person name="Reznik G."/>
            <person name="Jablonski L."/>
            <person name="Larsen N."/>
            <person name="D'Souza M."/>
            <person name="Bernal A."/>
            <person name="Mazur M."/>
            <person name="Goltsman E."/>
            <person name="Selkov E."/>
            <person name="Elzer P.H."/>
            <person name="Hagius S."/>
            <person name="O'Callaghan D."/>
            <person name="Letesson J.-J."/>
            <person name="Haselkorn R."/>
            <person name="Kyrpides N.C."/>
            <person name="Overbeek R."/>
        </authorList>
    </citation>
    <scope>NUCLEOTIDE SEQUENCE [LARGE SCALE GENOMIC DNA]</scope>
    <source>
        <strain>ATCC 23456 / CCUG 17765 / NCTC 10094 / 16M</strain>
    </source>
</reference>
<evidence type="ECO:0000255" key="1">
    <source>
        <dbReference type="HAMAP-Rule" id="MF_00073"/>
    </source>
</evidence>
<keyword id="KW-0694">RNA-binding</keyword>
<keyword id="KW-0804">Transcription</keyword>
<keyword id="KW-0889">Transcription antitermination</keyword>
<keyword id="KW-0805">Transcription regulation</keyword>
<dbReference type="EMBL" id="AE008917">
    <property type="protein sequence ID" value="AAL52367.1"/>
    <property type="molecule type" value="Genomic_DNA"/>
</dbReference>
<dbReference type="PIR" id="AD3400">
    <property type="entry name" value="AD3400"/>
</dbReference>
<dbReference type="RefSeq" id="WP_004683573.1">
    <property type="nucleotide sequence ID" value="NC_003317.1"/>
</dbReference>
<dbReference type="SMR" id="Q8YGH3"/>
<dbReference type="GeneID" id="29594036"/>
<dbReference type="KEGG" id="bme:BMEI1186"/>
<dbReference type="KEGG" id="bmel:DK63_223"/>
<dbReference type="PATRIC" id="fig|224914.52.peg.231"/>
<dbReference type="eggNOG" id="COG0781">
    <property type="taxonomic scope" value="Bacteria"/>
</dbReference>
<dbReference type="PhylomeDB" id="Q8YGH3"/>
<dbReference type="Proteomes" id="UP000000419">
    <property type="component" value="Chromosome I"/>
</dbReference>
<dbReference type="GO" id="GO:0005829">
    <property type="term" value="C:cytosol"/>
    <property type="evidence" value="ECO:0007669"/>
    <property type="project" value="TreeGrafter"/>
</dbReference>
<dbReference type="GO" id="GO:0003723">
    <property type="term" value="F:RNA binding"/>
    <property type="evidence" value="ECO:0007669"/>
    <property type="project" value="UniProtKB-UniRule"/>
</dbReference>
<dbReference type="GO" id="GO:0006353">
    <property type="term" value="P:DNA-templated transcription termination"/>
    <property type="evidence" value="ECO:0007669"/>
    <property type="project" value="UniProtKB-UniRule"/>
</dbReference>
<dbReference type="GO" id="GO:0031564">
    <property type="term" value="P:transcription antitermination"/>
    <property type="evidence" value="ECO:0007669"/>
    <property type="project" value="UniProtKB-KW"/>
</dbReference>
<dbReference type="Gene3D" id="1.10.940.10">
    <property type="entry name" value="NusB-like"/>
    <property type="match status" value="1"/>
</dbReference>
<dbReference type="HAMAP" id="MF_00073">
    <property type="entry name" value="NusB"/>
    <property type="match status" value="1"/>
</dbReference>
<dbReference type="InterPro" id="IPR035926">
    <property type="entry name" value="NusB-like_sf"/>
</dbReference>
<dbReference type="InterPro" id="IPR011605">
    <property type="entry name" value="NusB_fam"/>
</dbReference>
<dbReference type="InterPro" id="IPR006027">
    <property type="entry name" value="NusB_RsmB_TIM44"/>
</dbReference>
<dbReference type="NCBIfam" id="TIGR01951">
    <property type="entry name" value="nusB"/>
    <property type="match status" value="1"/>
</dbReference>
<dbReference type="PANTHER" id="PTHR11078:SF3">
    <property type="entry name" value="ANTITERMINATION NUSB DOMAIN-CONTAINING PROTEIN"/>
    <property type="match status" value="1"/>
</dbReference>
<dbReference type="PANTHER" id="PTHR11078">
    <property type="entry name" value="N UTILIZATION SUBSTANCE PROTEIN B-RELATED"/>
    <property type="match status" value="1"/>
</dbReference>
<dbReference type="Pfam" id="PF01029">
    <property type="entry name" value="NusB"/>
    <property type="match status" value="1"/>
</dbReference>
<dbReference type="SUPFAM" id="SSF48013">
    <property type="entry name" value="NusB-like"/>
    <property type="match status" value="1"/>
</dbReference>
<name>NUSB_BRUME</name>
<accession>Q8YGH3</accession>
<organism>
    <name type="scientific">Brucella melitensis biotype 1 (strain ATCC 23456 / CCUG 17765 / NCTC 10094 / 16M)</name>
    <dbReference type="NCBI Taxonomy" id="224914"/>
    <lineage>
        <taxon>Bacteria</taxon>
        <taxon>Pseudomonadati</taxon>
        <taxon>Pseudomonadota</taxon>
        <taxon>Alphaproteobacteria</taxon>
        <taxon>Hyphomicrobiales</taxon>
        <taxon>Brucellaceae</taxon>
        <taxon>Brucella/Ochrobactrum group</taxon>
        <taxon>Brucella</taxon>
    </lineage>
</organism>
<comment type="function">
    <text evidence="1">Involved in transcription antitermination. Required for transcription of ribosomal RNA (rRNA) genes. Binds specifically to the boxA antiterminator sequence of the ribosomal RNA (rrn) operons.</text>
</comment>
<comment type="similarity">
    <text evidence="1">Belongs to the NusB family.</text>
</comment>
<proteinExistence type="inferred from homology"/>
<gene>
    <name evidence="1" type="primary">nusB</name>
    <name type="ordered locus">BMEI1186</name>
</gene>
<sequence>MNSIPEGRPTPNLQRTANKRGVARLAAVQALFQMDVAGTGVMEVVAEYEAFRLGKEVDGTQYLDADPQWFRAIVAGVVEDQLKLDPMIHQALTEDWPLSRLDSTLRAILRAGAWELKARKDVPTAVIVSEYVDIAKAFYTEDEPKLVNAVLDRLALVIRGESRGAKPRHKS</sequence>
<feature type="chain" id="PRO_0000176515" description="Transcription antitermination protein NusB">
    <location>
        <begin position="1"/>
        <end position="171"/>
    </location>
</feature>
<protein>
    <recommendedName>
        <fullName evidence="1">Transcription antitermination protein NusB</fullName>
    </recommendedName>
    <alternativeName>
        <fullName evidence="1">Antitermination factor NusB</fullName>
    </alternativeName>
</protein>